<comment type="function">
    <text evidence="3">Part of the ABC transporter complex ArtPIQMJ involved in arginine transport. Probably responsible for the translocation of the substrate across the membrane.</text>
</comment>
<comment type="subunit">
    <text evidence="5">The complex is composed of two ATP-binding proteins (ArtP), two transmembrane proteins (ArtM and ArtQ) and two solute-binding proteins (ArtJ and ArtI).</text>
</comment>
<comment type="subcellular location">
    <subcellularLocation>
        <location>Cell inner membrane</location>
        <topology>Multi-pass membrane protein</topology>
    </subcellularLocation>
</comment>
<comment type="similarity">
    <text evidence="4">Belongs to the binding-protein-dependent transport system permease family. HisMQ subfamily.</text>
</comment>
<gene>
    <name type="primary">artM</name>
    <name type="ordered locus">b0861</name>
    <name type="ordered locus">JW0845</name>
</gene>
<protein>
    <recommendedName>
        <fullName>Arginine ABC transporter permease protein ArtM</fullName>
    </recommendedName>
</protein>
<accession>P0AE30</accession>
<accession>P30862</accession>
<accession>P77311</accession>
<sequence length="222" mass="24914">MFEYLPELMKGLHTSLTLTVASLIVALILALIFTIILTLKTPVLVWLVRGYITLFTGTPLLVQIFLIYYGPGQFPTLQEYPALWHLLSEPWLCALIALSLNSAAYTTQLFYGAIRAIPEGQWQSCSALGMSKKDTLAILLPYAFKRSLSSYSNEVVLVFKSTSLAYTITLMEVMGYSQLLYGRTYDVMVFGAAGIIYLVVNGLLTLMMRLIERKALAFERRN</sequence>
<name>ARTM_ECOLI</name>
<dbReference type="EMBL" id="X86160">
    <property type="protein sequence ID" value="CAA60104.1"/>
    <property type="molecule type" value="Genomic_DNA"/>
</dbReference>
<dbReference type="EMBL" id="U00096">
    <property type="protein sequence ID" value="AAC73948.1"/>
    <property type="molecule type" value="Genomic_DNA"/>
</dbReference>
<dbReference type="EMBL" id="AP009048">
    <property type="protein sequence ID" value="BAA35575.1"/>
    <property type="molecule type" value="Genomic_DNA"/>
</dbReference>
<dbReference type="PIR" id="E64824">
    <property type="entry name" value="E64824"/>
</dbReference>
<dbReference type="RefSeq" id="NP_415382.1">
    <property type="nucleotide sequence ID" value="NC_000913.3"/>
</dbReference>
<dbReference type="RefSeq" id="WP_000464491.1">
    <property type="nucleotide sequence ID" value="NZ_STEB01000019.1"/>
</dbReference>
<dbReference type="SMR" id="P0AE30"/>
<dbReference type="BioGRID" id="4263352">
    <property type="interactions" value="15"/>
</dbReference>
<dbReference type="BioGRID" id="853308">
    <property type="interactions" value="1"/>
</dbReference>
<dbReference type="ComplexPortal" id="CPX-4318">
    <property type="entry name" value="Arginine ABC transporter complex, artI variant"/>
</dbReference>
<dbReference type="ComplexPortal" id="CPX-4319">
    <property type="entry name" value="Arginine ABC transporter complex, artJ variant"/>
</dbReference>
<dbReference type="DIP" id="DIP-48169N"/>
<dbReference type="FunCoup" id="P0AE30">
    <property type="interactions" value="275"/>
</dbReference>
<dbReference type="IntAct" id="P0AE30">
    <property type="interactions" value="2"/>
</dbReference>
<dbReference type="STRING" id="511145.b0861"/>
<dbReference type="TCDB" id="3.A.1.3.3">
    <property type="family name" value="the atp-binding cassette (abc) superfamily"/>
</dbReference>
<dbReference type="jPOST" id="P0AE30"/>
<dbReference type="PaxDb" id="511145-b0861"/>
<dbReference type="EnsemblBacteria" id="AAC73948">
    <property type="protein sequence ID" value="AAC73948"/>
    <property type="gene ID" value="b0861"/>
</dbReference>
<dbReference type="GeneID" id="75202487"/>
<dbReference type="GeneID" id="949066"/>
<dbReference type="KEGG" id="ecj:JW0845"/>
<dbReference type="KEGG" id="eco:b0861"/>
<dbReference type="KEGG" id="ecoc:C3026_05365"/>
<dbReference type="PATRIC" id="fig|1411691.4.peg.1416"/>
<dbReference type="EchoBASE" id="EB1584"/>
<dbReference type="eggNOG" id="COG4160">
    <property type="taxonomic scope" value="Bacteria"/>
</dbReference>
<dbReference type="HOGENOM" id="CLU_019602_1_4_6"/>
<dbReference type="InParanoid" id="P0AE30"/>
<dbReference type="OMA" id="QWQSCQA"/>
<dbReference type="OrthoDB" id="4404959at2"/>
<dbReference type="PhylomeDB" id="P0AE30"/>
<dbReference type="BioCyc" id="EcoCyc:ARTM-MONOMER"/>
<dbReference type="BioCyc" id="MetaCyc:ARTM-MONOMER"/>
<dbReference type="PRO" id="PR:P0AE30"/>
<dbReference type="Proteomes" id="UP000000625">
    <property type="component" value="Chromosome"/>
</dbReference>
<dbReference type="GO" id="GO:0055052">
    <property type="term" value="C:ATP-binding cassette (ABC) transporter complex, substrate-binding subunit-containing"/>
    <property type="evidence" value="ECO:0000303"/>
    <property type="project" value="ComplexPortal"/>
</dbReference>
<dbReference type="GO" id="GO:0016020">
    <property type="term" value="C:membrane"/>
    <property type="evidence" value="ECO:0000303"/>
    <property type="project" value="ComplexPortal"/>
</dbReference>
<dbReference type="GO" id="GO:0005886">
    <property type="term" value="C:plasma membrane"/>
    <property type="evidence" value="ECO:0000314"/>
    <property type="project" value="EcoCyc"/>
</dbReference>
<dbReference type="GO" id="GO:0022857">
    <property type="term" value="F:transmembrane transporter activity"/>
    <property type="evidence" value="ECO:0007669"/>
    <property type="project" value="InterPro"/>
</dbReference>
<dbReference type="GO" id="GO:0006865">
    <property type="term" value="P:amino acid transport"/>
    <property type="evidence" value="ECO:0000318"/>
    <property type="project" value="GO_Central"/>
</dbReference>
<dbReference type="GO" id="GO:0097638">
    <property type="term" value="P:L-arginine import across plasma membrane"/>
    <property type="evidence" value="ECO:0000266"/>
    <property type="project" value="EcoCyc"/>
</dbReference>
<dbReference type="CDD" id="cd06261">
    <property type="entry name" value="TM_PBP2"/>
    <property type="match status" value="1"/>
</dbReference>
<dbReference type="FunFam" id="1.10.3720.10:FF:000017">
    <property type="entry name" value="Arginine ABC transporter permease protein ArtM"/>
    <property type="match status" value="1"/>
</dbReference>
<dbReference type="Gene3D" id="1.10.3720.10">
    <property type="entry name" value="MetI-like"/>
    <property type="match status" value="1"/>
</dbReference>
<dbReference type="InterPro" id="IPR010065">
    <property type="entry name" value="AA_ABC_transptr_permease_3TM"/>
</dbReference>
<dbReference type="InterPro" id="IPR043429">
    <property type="entry name" value="ArtM/GltK/GlnP/TcyL/YhdX-like"/>
</dbReference>
<dbReference type="InterPro" id="IPR000515">
    <property type="entry name" value="MetI-like"/>
</dbReference>
<dbReference type="InterPro" id="IPR035906">
    <property type="entry name" value="MetI-like_sf"/>
</dbReference>
<dbReference type="NCBIfam" id="TIGR01726">
    <property type="entry name" value="HEQRo_perm_3TM"/>
    <property type="match status" value="1"/>
</dbReference>
<dbReference type="NCBIfam" id="NF008336">
    <property type="entry name" value="PRK11122.1"/>
    <property type="match status" value="1"/>
</dbReference>
<dbReference type="PANTHER" id="PTHR30614:SF10">
    <property type="entry name" value="ARGININE ABC TRANSPORTER PERMEASE PROTEIN ARTM"/>
    <property type="match status" value="1"/>
</dbReference>
<dbReference type="PANTHER" id="PTHR30614">
    <property type="entry name" value="MEMBRANE COMPONENT OF AMINO ACID ABC TRANSPORTER"/>
    <property type="match status" value="1"/>
</dbReference>
<dbReference type="Pfam" id="PF00528">
    <property type="entry name" value="BPD_transp_1"/>
    <property type="match status" value="1"/>
</dbReference>
<dbReference type="SUPFAM" id="SSF161098">
    <property type="entry name" value="MetI-like"/>
    <property type="match status" value="1"/>
</dbReference>
<dbReference type="PROSITE" id="PS50928">
    <property type="entry name" value="ABC_TM1"/>
    <property type="match status" value="1"/>
</dbReference>
<evidence type="ECO:0000255" key="1"/>
<evidence type="ECO:0000255" key="2">
    <source>
        <dbReference type="PROSITE-ProRule" id="PRU00441"/>
    </source>
</evidence>
<evidence type="ECO:0000269" key="3">
    <source>
    </source>
</evidence>
<evidence type="ECO:0000305" key="4"/>
<evidence type="ECO:0000305" key="5">
    <source>
    </source>
</evidence>
<organism>
    <name type="scientific">Escherichia coli (strain K12)</name>
    <dbReference type="NCBI Taxonomy" id="83333"/>
    <lineage>
        <taxon>Bacteria</taxon>
        <taxon>Pseudomonadati</taxon>
        <taxon>Pseudomonadota</taxon>
        <taxon>Gammaproteobacteria</taxon>
        <taxon>Enterobacterales</taxon>
        <taxon>Enterobacteriaceae</taxon>
        <taxon>Escherichia</taxon>
    </lineage>
</organism>
<proteinExistence type="evidence at protein level"/>
<feature type="chain" id="PRO_0000059957" description="Arginine ABC transporter permease protein ArtM">
    <location>
        <begin position="1"/>
        <end position="222"/>
    </location>
</feature>
<feature type="topological domain" description="Periplasmic" evidence="1">
    <location>
        <begin position="1"/>
        <end position="15"/>
    </location>
</feature>
<feature type="transmembrane region" description="Helical" evidence="2">
    <location>
        <begin position="16"/>
        <end position="36"/>
    </location>
</feature>
<feature type="topological domain" description="Cytoplasmic" evidence="1">
    <location>
        <begin position="37"/>
        <end position="49"/>
    </location>
</feature>
<feature type="transmembrane region" description="Helical" evidence="2">
    <location>
        <begin position="50"/>
        <end position="70"/>
    </location>
</feature>
<feature type="topological domain" description="Periplasmic" evidence="1">
    <location>
        <begin position="71"/>
        <end position="79"/>
    </location>
</feature>
<feature type="transmembrane region" description="Helical" evidence="2">
    <location>
        <begin position="80"/>
        <end position="100"/>
    </location>
</feature>
<feature type="topological domain" description="Cytoplasmic" evidence="1">
    <location>
        <begin position="101"/>
        <end position="154"/>
    </location>
</feature>
<feature type="transmembrane region" description="Helical" evidence="2">
    <location>
        <begin position="155"/>
        <end position="175"/>
    </location>
</feature>
<feature type="topological domain" description="Periplasmic" evidence="1">
    <location>
        <begin position="176"/>
        <end position="186"/>
    </location>
</feature>
<feature type="transmembrane region" description="Helical" evidence="2">
    <location>
        <begin position="187"/>
        <end position="207"/>
    </location>
</feature>
<feature type="topological domain" description="Cytoplasmic" evidence="1">
    <location>
        <begin position="208"/>
        <end position="222"/>
    </location>
</feature>
<feature type="domain" description="ABC transmembrane type-1" evidence="2">
    <location>
        <begin position="12"/>
        <end position="208"/>
    </location>
</feature>
<feature type="sequence conflict" description="In Ref. 1; CAA60104." evidence="4" ref="1">
    <original>Q</original>
    <variation>R</variation>
    <location>
        <position position="63"/>
    </location>
</feature>
<feature type="sequence conflict" description="In Ref. 1; CAA60104." evidence="4" ref="1">
    <original>L</original>
    <variation>V</variation>
    <location>
        <position position="100"/>
    </location>
</feature>
<feature type="sequence conflict" description="In Ref. 1; CAA60104." evidence="4" ref="1">
    <original>L</original>
    <variation>V</variation>
    <location>
        <position position="216"/>
    </location>
</feature>
<keyword id="KW-0029">Amino-acid transport</keyword>
<keyword id="KW-0997">Cell inner membrane</keyword>
<keyword id="KW-1003">Cell membrane</keyword>
<keyword id="KW-0472">Membrane</keyword>
<keyword id="KW-1185">Reference proteome</keyword>
<keyword id="KW-0812">Transmembrane</keyword>
<keyword id="KW-1133">Transmembrane helix</keyword>
<keyword id="KW-0813">Transport</keyword>
<reference key="1">
    <citation type="journal article" date="1993" name="J. Bacteriol.">
        <title>Physical map location of the new artPIQMJ genes of Escherichia coli, encoding a periplasmic arginine transport system.</title>
        <authorList>
            <person name="Wissenbach U."/>
            <person name="Unden G."/>
        </authorList>
    </citation>
    <scope>NUCLEOTIDE SEQUENCE [GENOMIC DNA]</scope>
    <source>
        <strain>K12 / AN387</strain>
    </source>
</reference>
<reference key="2">
    <citation type="journal article" date="1996" name="DNA Res.">
        <title>A 718-kb DNA sequence of the Escherichia coli K-12 genome corresponding to the 12.7-28.0 min region on the linkage map.</title>
        <authorList>
            <person name="Oshima T."/>
            <person name="Aiba H."/>
            <person name="Baba T."/>
            <person name="Fujita K."/>
            <person name="Hayashi K."/>
            <person name="Honjo A."/>
            <person name="Ikemoto K."/>
            <person name="Inada T."/>
            <person name="Itoh T."/>
            <person name="Kajihara M."/>
            <person name="Kanai K."/>
            <person name="Kashimoto K."/>
            <person name="Kimura S."/>
            <person name="Kitagawa M."/>
            <person name="Makino K."/>
            <person name="Masuda S."/>
            <person name="Miki T."/>
            <person name="Mizobuchi K."/>
            <person name="Mori H."/>
            <person name="Motomura K."/>
            <person name="Nakamura Y."/>
            <person name="Nashimoto H."/>
            <person name="Nishio Y."/>
            <person name="Saito N."/>
            <person name="Sampei G."/>
            <person name="Seki Y."/>
            <person name="Tagami H."/>
            <person name="Takemoto K."/>
            <person name="Wada C."/>
            <person name="Yamamoto Y."/>
            <person name="Yano M."/>
            <person name="Horiuchi T."/>
        </authorList>
    </citation>
    <scope>NUCLEOTIDE SEQUENCE [LARGE SCALE GENOMIC DNA]</scope>
    <source>
        <strain>K12 / W3110 / ATCC 27325 / DSM 5911</strain>
    </source>
</reference>
<reference key="3">
    <citation type="journal article" date="1997" name="Science">
        <title>The complete genome sequence of Escherichia coli K-12.</title>
        <authorList>
            <person name="Blattner F.R."/>
            <person name="Plunkett G. III"/>
            <person name="Bloch C.A."/>
            <person name="Perna N.T."/>
            <person name="Burland V."/>
            <person name="Riley M."/>
            <person name="Collado-Vides J."/>
            <person name="Glasner J.D."/>
            <person name="Rode C.K."/>
            <person name="Mayhew G.F."/>
            <person name="Gregor J."/>
            <person name="Davis N.W."/>
            <person name="Kirkpatrick H.A."/>
            <person name="Goeden M.A."/>
            <person name="Rose D.J."/>
            <person name="Mau B."/>
            <person name="Shao Y."/>
        </authorList>
    </citation>
    <scope>NUCLEOTIDE SEQUENCE [LARGE SCALE GENOMIC DNA]</scope>
    <source>
        <strain>K12 / MG1655 / ATCC 47076</strain>
    </source>
</reference>
<reference key="4">
    <citation type="journal article" date="2006" name="Mol. Syst. Biol.">
        <title>Highly accurate genome sequences of Escherichia coli K-12 strains MG1655 and W3110.</title>
        <authorList>
            <person name="Hayashi K."/>
            <person name="Morooka N."/>
            <person name="Yamamoto Y."/>
            <person name="Fujita K."/>
            <person name="Isono K."/>
            <person name="Choi S."/>
            <person name="Ohtsubo E."/>
            <person name="Baba T."/>
            <person name="Wanner B.L."/>
            <person name="Mori H."/>
            <person name="Horiuchi T."/>
        </authorList>
    </citation>
    <scope>NUCLEOTIDE SEQUENCE [LARGE SCALE GENOMIC DNA]</scope>
    <source>
        <strain>K12 / W3110 / ATCC 27325 / DSM 5911</strain>
    </source>
</reference>
<reference key="5">
    <citation type="journal article" date="1995" name="Mol. Microbiol.">
        <title>A third periplasmic transport system for L-arginine in Escherichia coli: molecular characterization of the artPIQMJ genes, arginine binding and transport.</title>
        <authorList>
            <person name="Wissenbach U."/>
            <person name="Six S."/>
            <person name="Bongaerts J."/>
            <person name="Ternes D."/>
            <person name="Steinwachs S."/>
            <person name="Unden G."/>
        </authorList>
    </citation>
    <scope>FUNCTION</scope>
    <scope>SUBUNIT</scope>
</reference>
<reference key="6">
    <citation type="journal article" date="2005" name="Science">
        <title>Global topology analysis of the Escherichia coli inner membrane proteome.</title>
        <authorList>
            <person name="Daley D.O."/>
            <person name="Rapp M."/>
            <person name="Granseth E."/>
            <person name="Melen K."/>
            <person name="Drew D."/>
            <person name="von Heijne G."/>
        </authorList>
    </citation>
    <scope>TOPOLOGY [LARGE SCALE ANALYSIS]</scope>
    <source>
        <strain>K12 / MG1655 / ATCC 47076</strain>
    </source>
</reference>